<gene>
    <name type="primary">yhxD</name>
    <name type="ordered locus">BSU10430</name>
</gene>
<name>YHXD_BACSU</name>
<sequence>MSDSNLTNPIKAFFHDEFPEQYQEPPGLQKNMKPVPDCGEKSYKGSGKLTGRKALVTGGDSGIGRAAAIAYAREGADVAINYLPEEQPDAEEVKELIEAEGRKAVLIPGDLSDESFCQDLVKQSHHELGGLDVLALVAGKQQAVENIEDLPTEQIYKTFEVNVFSLYWVVKAALPYLPEGASIITTTSVEGYNPSPMLLDYAATKNAIIGFTVGLGKQLASKGIRVNSVAPGPIWTPLQISGGQPTENIPKFGQGTPPAPLNRAGQPVELADVYVFLASENSSYVTSQVYGITGGIPTA</sequence>
<feature type="chain" id="PRO_0000054845" description="Uncharacterized oxidoreductase YhxD">
    <location>
        <begin position="1"/>
        <end position="299"/>
    </location>
</feature>
<feature type="region of interest" description="Disordered" evidence="3">
    <location>
        <begin position="1"/>
        <end position="44"/>
    </location>
</feature>
<feature type="active site" description="Proton acceptor" evidence="2">
    <location>
        <position position="201"/>
    </location>
</feature>
<feature type="binding site" evidence="1">
    <location>
        <begin position="55"/>
        <end position="79"/>
    </location>
    <ligand>
        <name>NADP(+)</name>
        <dbReference type="ChEBI" id="CHEBI:58349"/>
    </ligand>
</feature>
<feature type="binding site" evidence="1">
    <location>
        <position position="188"/>
    </location>
    <ligand>
        <name>substrate</name>
    </ligand>
</feature>
<feature type="sequence conflict" description="In Ref. 3; CAA74549/AAB30865." evidence="4" ref="3">
    <original>A</original>
    <variation>S</variation>
    <location>
        <position position="202"/>
    </location>
</feature>
<keyword id="KW-0560">Oxidoreductase</keyword>
<keyword id="KW-1185">Reference proteome</keyword>
<proteinExistence type="inferred from homology"/>
<accession>P40398</accession>
<accession>O07554</accession>
<dbReference type="EC" id="1.-.-.-"/>
<dbReference type="EMBL" id="Y14081">
    <property type="protein sequence ID" value="CAA74462.1"/>
    <property type="molecule type" value="Genomic_DNA"/>
</dbReference>
<dbReference type="EMBL" id="Y14084">
    <property type="protein sequence ID" value="CAA74549.1"/>
    <property type="molecule type" value="Genomic_DNA"/>
</dbReference>
<dbReference type="EMBL" id="AL009126">
    <property type="protein sequence ID" value="CAB12883.1"/>
    <property type="molecule type" value="Genomic_DNA"/>
</dbReference>
<dbReference type="EMBL" id="S70734">
    <property type="protein sequence ID" value="AAB30865.1"/>
    <property type="molecule type" value="Genomic_DNA"/>
</dbReference>
<dbReference type="PIR" id="E69835">
    <property type="entry name" value="E69835"/>
</dbReference>
<dbReference type="RefSeq" id="NP_388924.1">
    <property type="nucleotide sequence ID" value="NC_000964.3"/>
</dbReference>
<dbReference type="RefSeq" id="WP_003245421.1">
    <property type="nucleotide sequence ID" value="NZ_OZ025638.1"/>
</dbReference>
<dbReference type="SMR" id="P40398"/>
<dbReference type="FunCoup" id="P40398">
    <property type="interactions" value="55"/>
</dbReference>
<dbReference type="STRING" id="224308.BSU10430"/>
<dbReference type="PaxDb" id="224308-BSU10430"/>
<dbReference type="EnsemblBacteria" id="CAB12883">
    <property type="protein sequence ID" value="CAB12883"/>
    <property type="gene ID" value="BSU_10430"/>
</dbReference>
<dbReference type="GeneID" id="939776"/>
<dbReference type="KEGG" id="bsu:BSU10430"/>
<dbReference type="PATRIC" id="fig|224308.179.peg.1121"/>
<dbReference type="eggNOG" id="COG1028">
    <property type="taxonomic scope" value="Bacteria"/>
</dbReference>
<dbReference type="InParanoid" id="P40398"/>
<dbReference type="OrthoDB" id="9803333at2"/>
<dbReference type="PhylomeDB" id="P40398"/>
<dbReference type="BioCyc" id="BSUB:BSU10430-MONOMER"/>
<dbReference type="Proteomes" id="UP000001570">
    <property type="component" value="Chromosome"/>
</dbReference>
<dbReference type="GO" id="GO:0016616">
    <property type="term" value="F:oxidoreductase activity, acting on the CH-OH group of donors, NAD or NADP as acceptor"/>
    <property type="evidence" value="ECO:0000318"/>
    <property type="project" value="GO_Central"/>
</dbReference>
<dbReference type="CDD" id="cd05355">
    <property type="entry name" value="SDR_c1"/>
    <property type="match status" value="1"/>
</dbReference>
<dbReference type="FunFam" id="3.40.50.720:FF:000097">
    <property type="entry name" value="SDR family oxidoreductase"/>
    <property type="match status" value="1"/>
</dbReference>
<dbReference type="Gene3D" id="3.40.50.720">
    <property type="entry name" value="NAD(P)-binding Rossmann-like Domain"/>
    <property type="match status" value="1"/>
</dbReference>
<dbReference type="InterPro" id="IPR036291">
    <property type="entry name" value="NAD(P)-bd_dom_sf"/>
</dbReference>
<dbReference type="InterPro" id="IPR020904">
    <property type="entry name" value="Sc_DH/Rdtase_CS"/>
</dbReference>
<dbReference type="InterPro" id="IPR002347">
    <property type="entry name" value="SDR_fam"/>
</dbReference>
<dbReference type="PANTHER" id="PTHR48107:SF16">
    <property type="entry name" value="NADPH-DEPENDENT ALDEHYDE REDUCTASE 1, CHLOROPLASTIC"/>
    <property type="match status" value="1"/>
</dbReference>
<dbReference type="PANTHER" id="PTHR48107">
    <property type="entry name" value="NADPH-DEPENDENT ALDEHYDE REDUCTASE-LIKE PROTEIN, CHLOROPLASTIC-RELATED"/>
    <property type="match status" value="1"/>
</dbReference>
<dbReference type="Pfam" id="PF13561">
    <property type="entry name" value="adh_short_C2"/>
    <property type="match status" value="1"/>
</dbReference>
<dbReference type="PRINTS" id="PR00081">
    <property type="entry name" value="GDHRDH"/>
</dbReference>
<dbReference type="SUPFAM" id="SSF51735">
    <property type="entry name" value="NAD(P)-binding Rossmann-fold domains"/>
    <property type="match status" value="1"/>
</dbReference>
<dbReference type="PROSITE" id="PS00061">
    <property type="entry name" value="ADH_SHORT"/>
    <property type="match status" value="1"/>
</dbReference>
<protein>
    <recommendedName>
        <fullName>Uncharacterized oxidoreductase YhxD</fullName>
        <ecNumber>1.-.-.-</ecNumber>
    </recommendedName>
    <alternativeName>
        <fullName>ORFY</fullName>
    </alternativeName>
</protein>
<organism>
    <name type="scientific">Bacillus subtilis (strain 168)</name>
    <dbReference type="NCBI Taxonomy" id="224308"/>
    <lineage>
        <taxon>Bacteria</taxon>
        <taxon>Bacillati</taxon>
        <taxon>Bacillota</taxon>
        <taxon>Bacilli</taxon>
        <taxon>Bacillales</taxon>
        <taxon>Bacillaceae</taxon>
        <taxon>Bacillus</taxon>
    </lineage>
</organism>
<evidence type="ECO:0000250" key="1"/>
<evidence type="ECO:0000255" key="2">
    <source>
        <dbReference type="PROSITE-ProRule" id="PRU10001"/>
    </source>
</evidence>
<evidence type="ECO:0000256" key="3">
    <source>
        <dbReference type="SAM" id="MobiDB-lite"/>
    </source>
</evidence>
<evidence type="ECO:0000305" key="4"/>
<comment type="similarity">
    <text evidence="4">Belongs to the short-chain dehydrogenases/reductases (SDR) family.</text>
</comment>
<reference key="1">
    <citation type="journal article" date="1998" name="Microbiology">
        <title>The 172 kb prkA-addAB region from 83 degrees to 97 degrees of the Bacillus subtilis chromosome contains several dysfunctional genes, the glyB marker, many genes encoding transporter proteins, and the ubiquitous hit gene.</title>
        <authorList>
            <person name="Noback M.A."/>
            <person name="Holsappel S."/>
            <person name="Kiewiet R."/>
            <person name="Terpstra P."/>
            <person name="Wambutt R."/>
            <person name="Wedler H."/>
            <person name="Venema G."/>
            <person name="Bron S."/>
        </authorList>
    </citation>
    <scope>NUCLEOTIDE SEQUENCE [GENOMIC DNA]</scope>
    <source>
        <strain>168</strain>
    </source>
</reference>
<reference key="2">
    <citation type="journal article" date="1997" name="Nature">
        <title>The complete genome sequence of the Gram-positive bacterium Bacillus subtilis.</title>
        <authorList>
            <person name="Kunst F."/>
            <person name="Ogasawara N."/>
            <person name="Moszer I."/>
            <person name="Albertini A.M."/>
            <person name="Alloni G."/>
            <person name="Azevedo V."/>
            <person name="Bertero M.G."/>
            <person name="Bessieres P."/>
            <person name="Bolotin A."/>
            <person name="Borchert S."/>
            <person name="Borriss R."/>
            <person name="Boursier L."/>
            <person name="Brans A."/>
            <person name="Braun M."/>
            <person name="Brignell S.C."/>
            <person name="Bron S."/>
            <person name="Brouillet S."/>
            <person name="Bruschi C.V."/>
            <person name="Caldwell B."/>
            <person name="Capuano V."/>
            <person name="Carter N.M."/>
            <person name="Choi S.-K."/>
            <person name="Codani J.-J."/>
            <person name="Connerton I.F."/>
            <person name="Cummings N.J."/>
            <person name="Daniel R.A."/>
            <person name="Denizot F."/>
            <person name="Devine K.M."/>
            <person name="Duesterhoeft A."/>
            <person name="Ehrlich S.D."/>
            <person name="Emmerson P.T."/>
            <person name="Entian K.-D."/>
            <person name="Errington J."/>
            <person name="Fabret C."/>
            <person name="Ferrari E."/>
            <person name="Foulger D."/>
            <person name="Fritz C."/>
            <person name="Fujita M."/>
            <person name="Fujita Y."/>
            <person name="Fuma S."/>
            <person name="Galizzi A."/>
            <person name="Galleron N."/>
            <person name="Ghim S.-Y."/>
            <person name="Glaser P."/>
            <person name="Goffeau A."/>
            <person name="Golightly E.J."/>
            <person name="Grandi G."/>
            <person name="Guiseppi G."/>
            <person name="Guy B.J."/>
            <person name="Haga K."/>
            <person name="Haiech J."/>
            <person name="Harwood C.R."/>
            <person name="Henaut A."/>
            <person name="Hilbert H."/>
            <person name="Holsappel S."/>
            <person name="Hosono S."/>
            <person name="Hullo M.-F."/>
            <person name="Itaya M."/>
            <person name="Jones L.-M."/>
            <person name="Joris B."/>
            <person name="Karamata D."/>
            <person name="Kasahara Y."/>
            <person name="Klaerr-Blanchard M."/>
            <person name="Klein C."/>
            <person name="Kobayashi Y."/>
            <person name="Koetter P."/>
            <person name="Koningstein G."/>
            <person name="Krogh S."/>
            <person name="Kumano M."/>
            <person name="Kurita K."/>
            <person name="Lapidus A."/>
            <person name="Lardinois S."/>
            <person name="Lauber J."/>
            <person name="Lazarevic V."/>
            <person name="Lee S.-M."/>
            <person name="Levine A."/>
            <person name="Liu H."/>
            <person name="Masuda S."/>
            <person name="Mauel C."/>
            <person name="Medigue C."/>
            <person name="Medina N."/>
            <person name="Mellado R.P."/>
            <person name="Mizuno M."/>
            <person name="Moestl D."/>
            <person name="Nakai S."/>
            <person name="Noback M."/>
            <person name="Noone D."/>
            <person name="O'Reilly M."/>
            <person name="Ogawa K."/>
            <person name="Ogiwara A."/>
            <person name="Oudega B."/>
            <person name="Park S.-H."/>
            <person name="Parro V."/>
            <person name="Pohl T.M."/>
            <person name="Portetelle D."/>
            <person name="Porwollik S."/>
            <person name="Prescott A.M."/>
            <person name="Presecan E."/>
            <person name="Pujic P."/>
            <person name="Purnelle B."/>
            <person name="Rapoport G."/>
            <person name="Rey M."/>
            <person name="Reynolds S."/>
            <person name="Rieger M."/>
            <person name="Rivolta C."/>
            <person name="Rocha E."/>
            <person name="Roche B."/>
            <person name="Rose M."/>
            <person name="Sadaie Y."/>
            <person name="Sato T."/>
            <person name="Scanlan E."/>
            <person name="Schleich S."/>
            <person name="Schroeter R."/>
            <person name="Scoffone F."/>
            <person name="Sekiguchi J."/>
            <person name="Sekowska A."/>
            <person name="Seror S.J."/>
            <person name="Serror P."/>
            <person name="Shin B.-S."/>
            <person name="Soldo B."/>
            <person name="Sorokin A."/>
            <person name="Tacconi E."/>
            <person name="Takagi T."/>
            <person name="Takahashi H."/>
            <person name="Takemaru K."/>
            <person name="Takeuchi M."/>
            <person name="Tamakoshi A."/>
            <person name="Tanaka T."/>
            <person name="Terpstra P."/>
            <person name="Tognoni A."/>
            <person name="Tosato V."/>
            <person name="Uchiyama S."/>
            <person name="Vandenbol M."/>
            <person name="Vannier F."/>
            <person name="Vassarotti A."/>
            <person name="Viari A."/>
            <person name="Wambutt R."/>
            <person name="Wedler E."/>
            <person name="Wedler H."/>
            <person name="Weitzenegger T."/>
            <person name="Winters P."/>
            <person name="Wipat A."/>
            <person name="Yamamoto H."/>
            <person name="Yamane K."/>
            <person name="Yasumoto K."/>
            <person name="Yata K."/>
            <person name="Yoshida K."/>
            <person name="Yoshikawa H.-F."/>
            <person name="Zumstein E."/>
            <person name="Yoshikawa H."/>
            <person name="Danchin A."/>
        </authorList>
    </citation>
    <scope>NUCLEOTIDE SEQUENCE [LARGE SCALE GENOMIC DNA]</scope>
    <source>
        <strain>168</strain>
    </source>
</reference>
<reference key="3">
    <citation type="journal article" date="1994" name="Mol. Microbiol.">
        <title>Molecular cloning and sequence of comK, a gene required for genetic competence in Bacillus subtilis.</title>
        <authorList>
            <person name="van Sinderen D."/>
            <person name="ten Berge A."/>
            <person name="Hayema B.J."/>
            <person name="Hamoen L."/>
            <person name="Venema G."/>
        </authorList>
    </citation>
    <scope>NUCLEOTIDE SEQUENCE [GENOMIC DNA] OF 160-299</scope>
    <source>
        <strain>E26</strain>
    </source>
</reference>